<sequence length="316" mass="33876">MTAQQLDASGRLRHLLTLEGLPRETLLQLLDRAGQIRDAAVGRVGNKRQVLAGSAVCTLFFEPSTRTRSSFQLAAQRLGADVLNFDASTSSTRKGETACDTLRNLEAMGVRGFVVRHPDDGAVAALAEAAGEGTALINAGDGRSAHPTQGLLDMLTLRQAKGPDFSKMKVVIVGDVKHSRVARTDLHALRTLGVGEIRVCGPQSLLPDDETLKGCVVGDDFDAMLEGVDALMMLRLQRERMEEGLVPSLEQYHAQYGLTNERLARAGKDAAVLHPGPINRGVEVTDEVADGPQSWVLRQVANGVAVRMAVLETLLG</sequence>
<protein>
    <recommendedName>
        <fullName evidence="1">Aspartate carbamoyltransferase catalytic subunit</fullName>
        <ecNumber evidence="1">2.1.3.2</ecNumber>
    </recommendedName>
    <alternativeName>
        <fullName evidence="1">Aspartate transcarbamylase</fullName>
        <shortName evidence="1">ATCase</shortName>
    </alternativeName>
</protein>
<comment type="function">
    <text evidence="1">Catalyzes the condensation of carbamoyl phosphate and aspartate to form carbamoyl aspartate and inorganic phosphate, the committed step in the de novo pyrimidine nucleotide biosynthesis pathway.</text>
</comment>
<comment type="catalytic activity">
    <reaction evidence="1">
        <text>carbamoyl phosphate + L-aspartate = N-carbamoyl-L-aspartate + phosphate + H(+)</text>
        <dbReference type="Rhea" id="RHEA:20013"/>
        <dbReference type="ChEBI" id="CHEBI:15378"/>
        <dbReference type="ChEBI" id="CHEBI:29991"/>
        <dbReference type="ChEBI" id="CHEBI:32814"/>
        <dbReference type="ChEBI" id="CHEBI:43474"/>
        <dbReference type="ChEBI" id="CHEBI:58228"/>
        <dbReference type="EC" id="2.1.3.2"/>
    </reaction>
</comment>
<comment type="pathway">
    <text evidence="1">Pyrimidine metabolism; UMP biosynthesis via de novo pathway; (S)-dihydroorotate from bicarbonate: step 2/3.</text>
</comment>
<comment type="subunit">
    <text evidence="1">Heterododecamer (2C3:3R2) of six catalytic PyrB chains organized as two trimers (C3), and six regulatory PyrI chains organized as three dimers (R2).</text>
</comment>
<comment type="similarity">
    <text evidence="1">Belongs to the aspartate/ornithine carbamoyltransferase superfamily. ATCase family.</text>
</comment>
<gene>
    <name evidence="1" type="primary">pyrB</name>
    <name type="ordered locus">Smal_0942</name>
</gene>
<organism>
    <name type="scientific">Stenotrophomonas maltophilia (strain R551-3)</name>
    <dbReference type="NCBI Taxonomy" id="391008"/>
    <lineage>
        <taxon>Bacteria</taxon>
        <taxon>Pseudomonadati</taxon>
        <taxon>Pseudomonadota</taxon>
        <taxon>Gammaproteobacteria</taxon>
        <taxon>Lysobacterales</taxon>
        <taxon>Lysobacteraceae</taxon>
        <taxon>Stenotrophomonas</taxon>
        <taxon>Stenotrophomonas maltophilia group</taxon>
    </lineage>
</organism>
<accession>B4SMH0</accession>
<keyword id="KW-0665">Pyrimidine biosynthesis</keyword>
<keyword id="KW-0808">Transferase</keyword>
<name>PYRB_STRM5</name>
<reference key="1">
    <citation type="submission" date="2008-06" db="EMBL/GenBank/DDBJ databases">
        <title>Complete sequence of Stenotrophomonas maltophilia R551-3.</title>
        <authorList>
            <consortium name="US DOE Joint Genome Institute"/>
            <person name="Lucas S."/>
            <person name="Copeland A."/>
            <person name="Lapidus A."/>
            <person name="Glavina del Rio T."/>
            <person name="Dalin E."/>
            <person name="Tice H."/>
            <person name="Pitluck S."/>
            <person name="Chain P."/>
            <person name="Malfatti S."/>
            <person name="Shin M."/>
            <person name="Vergez L."/>
            <person name="Lang D."/>
            <person name="Schmutz J."/>
            <person name="Larimer F."/>
            <person name="Land M."/>
            <person name="Hauser L."/>
            <person name="Kyrpides N."/>
            <person name="Mikhailova N."/>
            <person name="Taghavi S."/>
            <person name="Monchy S."/>
            <person name="Newman L."/>
            <person name="Vangronsveld J."/>
            <person name="van der Lelie D."/>
            <person name="Richardson P."/>
        </authorList>
    </citation>
    <scope>NUCLEOTIDE SEQUENCE [LARGE SCALE GENOMIC DNA]</scope>
    <source>
        <strain>R551-3</strain>
    </source>
</reference>
<proteinExistence type="inferred from homology"/>
<evidence type="ECO:0000255" key="1">
    <source>
        <dbReference type="HAMAP-Rule" id="MF_00001"/>
    </source>
</evidence>
<feature type="chain" id="PRO_1000088805" description="Aspartate carbamoyltransferase catalytic subunit">
    <location>
        <begin position="1"/>
        <end position="316"/>
    </location>
</feature>
<feature type="binding site" evidence="1">
    <location>
        <position position="66"/>
    </location>
    <ligand>
        <name>carbamoyl phosphate</name>
        <dbReference type="ChEBI" id="CHEBI:58228"/>
    </ligand>
</feature>
<feature type="binding site" evidence="1">
    <location>
        <position position="67"/>
    </location>
    <ligand>
        <name>carbamoyl phosphate</name>
        <dbReference type="ChEBI" id="CHEBI:58228"/>
    </ligand>
</feature>
<feature type="binding site" evidence="1">
    <location>
        <position position="94"/>
    </location>
    <ligand>
        <name>L-aspartate</name>
        <dbReference type="ChEBI" id="CHEBI:29991"/>
    </ligand>
</feature>
<feature type="binding site" evidence="1">
    <location>
        <position position="116"/>
    </location>
    <ligand>
        <name>carbamoyl phosphate</name>
        <dbReference type="ChEBI" id="CHEBI:58228"/>
    </ligand>
</feature>
<feature type="binding site" evidence="1">
    <location>
        <position position="146"/>
    </location>
    <ligand>
        <name>carbamoyl phosphate</name>
        <dbReference type="ChEBI" id="CHEBI:58228"/>
    </ligand>
</feature>
<feature type="binding site" evidence="1">
    <location>
        <position position="149"/>
    </location>
    <ligand>
        <name>carbamoyl phosphate</name>
        <dbReference type="ChEBI" id="CHEBI:58228"/>
    </ligand>
</feature>
<feature type="binding site" evidence="1">
    <location>
        <position position="180"/>
    </location>
    <ligand>
        <name>L-aspartate</name>
        <dbReference type="ChEBI" id="CHEBI:29991"/>
    </ligand>
</feature>
<feature type="binding site" evidence="1">
    <location>
        <position position="235"/>
    </location>
    <ligand>
        <name>L-aspartate</name>
        <dbReference type="ChEBI" id="CHEBI:29991"/>
    </ligand>
</feature>
<feature type="binding site" evidence="1">
    <location>
        <position position="276"/>
    </location>
    <ligand>
        <name>carbamoyl phosphate</name>
        <dbReference type="ChEBI" id="CHEBI:58228"/>
    </ligand>
</feature>
<feature type="binding site" evidence="1">
    <location>
        <position position="277"/>
    </location>
    <ligand>
        <name>carbamoyl phosphate</name>
        <dbReference type="ChEBI" id="CHEBI:58228"/>
    </ligand>
</feature>
<dbReference type="EC" id="2.1.3.2" evidence="1"/>
<dbReference type="EMBL" id="CP001111">
    <property type="protein sequence ID" value="ACF50647.1"/>
    <property type="molecule type" value="Genomic_DNA"/>
</dbReference>
<dbReference type="RefSeq" id="WP_004147181.1">
    <property type="nucleotide sequence ID" value="NC_011071.1"/>
</dbReference>
<dbReference type="SMR" id="B4SMH0"/>
<dbReference type="STRING" id="391008.Smal_0942"/>
<dbReference type="KEGG" id="smt:Smal_0942"/>
<dbReference type="eggNOG" id="COG0540">
    <property type="taxonomic scope" value="Bacteria"/>
</dbReference>
<dbReference type="HOGENOM" id="CLU_043846_2_0_6"/>
<dbReference type="OrthoDB" id="9774690at2"/>
<dbReference type="UniPathway" id="UPA00070">
    <property type="reaction ID" value="UER00116"/>
</dbReference>
<dbReference type="Proteomes" id="UP000001867">
    <property type="component" value="Chromosome"/>
</dbReference>
<dbReference type="GO" id="GO:0005829">
    <property type="term" value="C:cytosol"/>
    <property type="evidence" value="ECO:0007669"/>
    <property type="project" value="TreeGrafter"/>
</dbReference>
<dbReference type="GO" id="GO:0016597">
    <property type="term" value="F:amino acid binding"/>
    <property type="evidence" value="ECO:0007669"/>
    <property type="project" value="InterPro"/>
</dbReference>
<dbReference type="GO" id="GO:0004070">
    <property type="term" value="F:aspartate carbamoyltransferase activity"/>
    <property type="evidence" value="ECO:0007669"/>
    <property type="project" value="UniProtKB-UniRule"/>
</dbReference>
<dbReference type="GO" id="GO:0006207">
    <property type="term" value="P:'de novo' pyrimidine nucleobase biosynthetic process"/>
    <property type="evidence" value="ECO:0007669"/>
    <property type="project" value="InterPro"/>
</dbReference>
<dbReference type="GO" id="GO:0044205">
    <property type="term" value="P:'de novo' UMP biosynthetic process"/>
    <property type="evidence" value="ECO:0007669"/>
    <property type="project" value="UniProtKB-UniRule"/>
</dbReference>
<dbReference type="GO" id="GO:0006520">
    <property type="term" value="P:amino acid metabolic process"/>
    <property type="evidence" value="ECO:0007669"/>
    <property type="project" value="InterPro"/>
</dbReference>
<dbReference type="FunFam" id="3.40.50.1370:FF:000007">
    <property type="entry name" value="Aspartate carbamoyltransferase"/>
    <property type="match status" value="1"/>
</dbReference>
<dbReference type="FunFam" id="3.40.50.1370:FF:000019">
    <property type="entry name" value="Aspartate carbamoyltransferase"/>
    <property type="match status" value="1"/>
</dbReference>
<dbReference type="Gene3D" id="3.40.50.1370">
    <property type="entry name" value="Aspartate/ornithine carbamoyltransferase"/>
    <property type="match status" value="2"/>
</dbReference>
<dbReference type="HAMAP" id="MF_00001">
    <property type="entry name" value="Asp_carb_tr"/>
    <property type="match status" value="1"/>
</dbReference>
<dbReference type="InterPro" id="IPR006132">
    <property type="entry name" value="Asp/Orn_carbamoyltranf_P-bd"/>
</dbReference>
<dbReference type="InterPro" id="IPR006130">
    <property type="entry name" value="Asp/Orn_carbamoylTrfase"/>
</dbReference>
<dbReference type="InterPro" id="IPR036901">
    <property type="entry name" value="Asp/Orn_carbamoylTrfase_sf"/>
</dbReference>
<dbReference type="InterPro" id="IPR002082">
    <property type="entry name" value="Asp_carbamoyltransf"/>
</dbReference>
<dbReference type="InterPro" id="IPR006131">
    <property type="entry name" value="Asp_carbamoyltransf_Asp/Orn-bd"/>
</dbReference>
<dbReference type="NCBIfam" id="TIGR00670">
    <property type="entry name" value="asp_carb_tr"/>
    <property type="match status" value="1"/>
</dbReference>
<dbReference type="NCBIfam" id="NF002032">
    <property type="entry name" value="PRK00856.1"/>
    <property type="match status" value="1"/>
</dbReference>
<dbReference type="PANTHER" id="PTHR45753:SF6">
    <property type="entry name" value="ASPARTATE CARBAMOYLTRANSFERASE"/>
    <property type="match status" value="1"/>
</dbReference>
<dbReference type="PANTHER" id="PTHR45753">
    <property type="entry name" value="ORNITHINE CARBAMOYLTRANSFERASE, MITOCHONDRIAL"/>
    <property type="match status" value="1"/>
</dbReference>
<dbReference type="Pfam" id="PF00185">
    <property type="entry name" value="OTCace"/>
    <property type="match status" value="1"/>
</dbReference>
<dbReference type="Pfam" id="PF02729">
    <property type="entry name" value="OTCace_N"/>
    <property type="match status" value="1"/>
</dbReference>
<dbReference type="PRINTS" id="PR00100">
    <property type="entry name" value="AOTCASE"/>
</dbReference>
<dbReference type="PRINTS" id="PR00101">
    <property type="entry name" value="ATCASE"/>
</dbReference>
<dbReference type="SUPFAM" id="SSF53671">
    <property type="entry name" value="Aspartate/ornithine carbamoyltransferase"/>
    <property type="match status" value="1"/>
</dbReference>
<dbReference type="PROSITE" id="PS00097">
    <property type="entry name" value="CARBAMOYLTRANSFERASE"/>
    <property type="match status" value="1"/>
</dbReference>